<accession>P05449</accession>
<accession>O05939</accession>
<dbReference type="EMBL" id="Z00018">
    <property type="protein sequence ID" value="CAA77302.1"/>
    <property type="molecule type" value="Genomic_DNA"/>
</dbReference>
<dbReference type="PIR" id="S04674">
    <property type="entry name" value="S04674"/>
</dbReference>
<dbReference type="PDB" id="2NXV">
    <property type="method" value="X-ray"/>
    <property type="resolution" value="1.10 A"/>
    <property type="chains" value="A/B=1-249"/>
</dbReference>
<dbReference type="PDB" id="2QGI">
    <property type="method" value="X-ray"/>
    <property type="resolution" value="1.65 A"/>
    <property type="chains" value="A/B=2-249"/>
</dbReference>
<dbReference type="PDBsum" id="2NXV"/>
<dbReference type="PDBsum" id="2QGI"/>
<dbReference type="SMR" id="P05449"/>
<dbReference type="EvolutionaryTrace" id="P05449"/>
<dbReference type="Gene3D" id="3.90.550.10">
    <property type="entry name" value="Spore Coat Polysaccharide Biosynthesis Protein SpsA, Chain A"/>
    <property type="match status" value="1"/>
</dbReference>
<dbReference type="InterPro" id="IPR029044">
    <property type="entry name" value="Nucleotide-diphossugar_trans"/>
</dbReference>
<sequence length="249" mass="28809">MKPVPTYVQDKDESTLMFSVCSLVRDQAKYDRLLESFERFGFTPDKAEFLAADNREGNQFHGFSWHKQMLPRCKGRYVIFCHEDVELVDRGYDDLVAAIEALEEADPKWLVAGVAGSPWRPLNHSVTAQALHISDVFGNDRRRGNVPCRVESLDECFLLMRRLKPVLNSYDMQGFHYYGADLCLQAEFLGGRAYAIDFHLHHYGRAIADENFHRLRQEMAQKYRRWFPGRILHCVTGRVALGGGWYEAR</sequence>
<keyword id="KW-0002">3D-structure</keyword>
<proteinExistence type="evidence at protein level"/>
<reference key="1">
    <citation type="journal article" date="1984" name="J. Mol. Biol.">
        <title>Rhodopseudomonas blastica atp operon. Nucleotide sequence and transcription.</title>
        <authorList>
            <person name="Tybulewicz V.L.J."/>
            <person name="Falk G."/>
            <person name="Walker J.E."/>
        </authorList>
    </citation>
    <scope>NUCLEOTIDE SEQUENCE [GENOMIC DNA]</scope>
</reference>
<reference key="2">
    <citation type="submission" date="1999-03" db="EMBL/GenBank/DDBJ databases">
        <authorList>
            <person name="Tybulewicz V.L.J."/>
            <person name="Falk G."/>
            <person name="Walker J.E."/>
        </authorList>
    </citation>
    <scope>SEQUENCE REVISION TO 164</scope>
</reference>
<evidence type="ECO:0007829" key="1">
    <source>
        <dbReference type="PDB" id="2NXV"/>
    </source>
</evidence>
<evidence type="ECO:0007829" key="2">
    <source>
        <dbReference type="PDB" id="2QGI"/>
    </source>
</evidence>
<feature type="chain" id="PRO_0000066136" description="ATP synthase subunits region ORF 6">
    <location>
        <begin position="1"/>
        <end position="249"/>
    </location>
</feature>
<feature type="strand" evidence="1">
    <location>
        <begin position="6"/>
        <end position="8"/>
    </location>
</feature>
<feature type="strand" evidence="1">
    <location>
        <begin position="17"/>
        <end position="25"/>
    </location>
</feature>
<feature type="helix" evidence="1">
    <location>
        <begin position="27"/>
        <end position="39"/>
    </location>
</feature>
<feature type="turn" evidence="1">
    <location>
        <begin position="44"/>
        <end position="46"/>
    </location>
</feature>
<feature type="strand" evidence="1">
    <location>
        <begin position="47"/>
        <end position="53"/>
    </location>
</feature>
<feature type="strand" evidence="2">
    <location>
        <begin position="55"/>
        <end position="57"/>
    </location>
</feature>
<feature type="turn" evidence="1">
    <location>
        <begin position="62"/>
        <end position="64"/>
    </location>
</feature>
<feature type="helix" evidence="1">
    <location>
        <begin position="65"/>
        <end position="69"/>
    </location>
</feature>
<feature type="helix" evidence="1">
    <location>
        <begin position="70"/>
        <end position="72"/>
    </location>
</feature>
<feature type="strand" evidence="1">
    <location>
        <begin position="75"/>
        <end position="82"/>
    </location>
</feature>
<feature type="helix" evidence="1">
    <location>
        <begin position="92"/>
        <end position="105"/>
    </location>
</feature>
<feature type="strand" evidence="1">
    <location>
        <begin position="109"/>
        <end position="120"/>
    </location>
</feature>
<feature type="strand" evidence="1">
    <location>
        <begin position="130"/>
        <end position="135"/>
    </location>
</feature>
<feature type="strand" evidence="1">
    <location>
        <begin position="138"/>
        <end position="144"/>
    </location>
</feature>
<feature type="strand" evidence="1">
    <location>
        <begin position="146"/>
        <end position="153"/>
    </location>
</feature>
<feature type="strand" evidence="1">
    <location>
        <begin position="157"/>
        <end position="161"/>
    </location>
</feature>
<feature type="strand" evidence="1">
    <location>
        <begin position="174"/>
        <end position="177"/>
    </location>
</feature>
<feature type="helix" evidence="1">
    <location>
        <begin position="178"/>
        <end position="188"/>
    </location>
</feature>
<feature type="strand" evidence="1">
    <location>
        <begin position="192"/>
        <end position="195"/>
    </location>
</feature>
<feature type="helix" evidence="1">
    <location>
        <begin position="210"/>
        <end position="223"/>
    </location>
</feature>
<feature type="turn" evidence="1">
    <location>
        <begin position="224"/>
        <end position="226"/>
    </location>
</feature>
<feature type="strand" evidence="1">
    <location>
        <begin position="231"/>
        <end position="234"/>
    </location>
</feature>
<feature type="strand" evidence="1">
    <location>
        <begin position="237"/>
        <end position="240"/>
    </location>
</feature>
<feature type="helix" evidence="1">
    <location>
        <begin position="244"/>
        <end position="247"/>
    </location>
</feature>
<name>YAT6_FUSBL</name>
<protein>
    <recommendedName>
        <fullName>ATP synthase subunits region ORF 6</fullName>
    </recommendedName>
</protein>
<organism>
    <name type="scientific">Fuscovulum blasticum</name>
    <name type="common">Rhodobacter blasticus</name>
    <name type="synonym">Rhodopseudomonas blastica</name>
    <dbReference type="NCBI Taxonomy" id="1075"/>
    <lineage>
        <taxon>Bacteria</taxon>
        <taxon>Pseudomonadati</taxon>
        <taxon>Pseudomonadota</taxon>
        <taxon>Alphaproteobacteria</taxon>
        <taxon>Rhodobacterales</taxon>
        <taxon>Paracoccaceae</taxon>
        <taxon>Pseudogemmobacter</taxon>
    </lineage>
</organism>